<proteinExistence type="inferred from homology"/>
<protein>
    <recommendedName>
        <fullName evidence="1">Structure-specific endonuclease subunit SLX1</fullName>
        <ecNumber evidence="1">3.1.-.-</ecNumber>
    </recommendedName>
</protein>
<gene>
    <name evidence="1" type="primary">SLX1</name>
    <name type="ORF">UMAG_01857</name>
</gene>
<dbReference type="EC" id="3.1.-.-" evidence="1"/>
<dbReference type="EMBL" id="CM003142">
    <property type="protein sequence ID" value="KIS70699.1"/>
    <property type="molecule type" value="Genomic_DNA"/>
</dbReference>
<dbReference type="RefSeq" id="XP_011387796.1">
    <property type="nucleotide sequence ID" value="XM_011389494.1"/>
</dbReference>
<dbReference type="SMR" id="Q4PDF6"/>
<dbReference type="STRING" id="237631.Q4PDF6"/>
<dbReference type="EnsemblFungi" id="KIS70699">
    <property type="protein sequence ID" value="KIS70699"/>
    <property type="gene ID" value="UMAG_01857"/>
</dbReference>
<dbReference type="GeneID" id="23562742"/>
<dbReference type="KEGG" id="uma:UMAG_01857"/>
<dbReference type="VEuPathDB" id="FungiDB:UMAG_01857"/>
<dbReference type="eggNOG" id="KOG3005">
    <property type="taxonomic scope" value="Eukaryota"/>
</dbReference>
<dbReference type="HOGENOM" id="CLU_432191_0_0_1"/>
<dbReference type="InParanoid" id="Q4PDF6"/>
<dbReference type="OMA" id="ACYFLRS"/>
<dbReference type="OrthoDB" id="24645at2759"/>
<dbReference type="Proteomes" id="UP000000561">
    <property type="component" value="Chromosome 3"/>
</dbReference>
<dbReference type="GO" id="GO:0033557">
    <property type="term" value="C:Slx1-Slx4 complex"/>
    <property type="evidence" value="ECO:0000318"/>
    <property type="project" value="GO_Central"/>
</dbReference>
<dbReference type="GO" id="GO:0017108">
    <property type="term" value="F:5'-flap endonuclease activity"/>
    <property type="evidence" value="ECO:0000318"/>
    <property type="project" value="GO_Central"/>
</dbReference>
<dbReference type="GO" id="GO:0008821">
    <property type="term" value="F:crossover junction DNA endonuclease activity"/>
    <property type="evidence" value="ECO:0000318"/>
    <property type="project" value="GO_Central"/>
</dbReference>
<dbReference type="GO" id="GO:0000724">
    <property type="term" value="P:double-strand break repair via homologous recombination"/>
    <property type="evidence" value="ECO:0000318"/>
    <property type="project" value="GO_Central"/>
</dbReference>
<dbReference type="CDD" id="cd10455">
    <property type="entry name" value="GIY-YIG_SLX1"/>
    <property type="match status" value="1"/>
</dbReference>
<dbReference type="FunFam" id="3.40.1440.10:FF:000006">
    <property type="entry name" value="Structure-specific endonuclease subunit SLX1"/>
    <property type="match status" value="1"/>
</dbReference>
<dbReference type="Gene3D" id="3.40.1440.10">
    <property type="entry name" value="GIY-YIG endonuclease"/>
    <property type="match status" value="1"/>
</dbReference>
<dbReference type="Gene3D" id="3.30.40.10">
    <property type="entry name" value="Zinc/RING finger domain, C3HC4 (zinc finger)"/>
    <property type="match status" value="1"/>
</dbReference>
<dbReference type="HAMAP" id="MF_03100">
    <property type="entry name" value="Endonuc_su_Slx1"/>
    <property type="match status" value="1"/>
</dbReference>
<dbReference type="InterPro" id="IPR000305">
    <property type="entry name" value="GIY-YIG_endonuc"/>
</dbReference>
<dbReference type="InterPro" id="IPR035901">
    <property type="entry name" value="GIY-YIG_endonuc_sf"/>
</dbReference>
<dbReference type="InterPro" id="IPR027520">
    <property type="entry name" value="Slx1"/>
</dbReference>
<dbReference type="InterPro" id="IPR048749">
    <property type="entry name" value="SLX1_C"/>
</dbReference>
<dbReference type="InterPro" id="IPR050381">
    <property type="entry name" value="SLX1_endonuclease"/>
</dbReference>
<dbReference type="InterPro" id="IPR013083">
    <property type="entry name" value="Znf_RING/FYVE/PHD"/>
</dbReference>
<dbReference type="PANTHER" id="PTHR20208">
    <property type="entry name" value="STRUCTURE-SPECIFIC ENDONUCLEASE SUBUNIT SLX1"/>
    <property type="match status" value="1"/>
</dbReference>
<dbReference type="PANTHER" id="PTHR20208:SF10">
    <property type="entry name" value="STRUCTURE-SPECIFIC ENDONUCLEASE SUBUNIT SLX1"/>
    <property type="match status" value="1"/>
</dbReference>
<dbReference type="Pfam" id="PF01541">
    <property type="entry name" value="GIY-YIG"/>
    <property type="match status" value="1"/>
</dbReference>
<dbReference type="Pfam" id="PF21202">
    <property type="entry name" value="SLX1_C"/>
    <property type="match status" value="1"/>
</dbReference>
<dbReference type="PROSITE" id="PS50164">
    <property type="entry name" value="GIY_YIG"/>
    <property type="match status" value="1"/>
</dbReference>
<evidence type="ECO:0000255" key="1">
    <source>
        <dbReference type="HAMAP-Rule" id="MF_03100"/>
    </source>
</evidence>
<evidence type="ECO:0000256" key="2">
    <source>
        <dbReference type="SAM" id="MobiDB-lite"/>
    </source>
</evidence>
<accession>Q4PDF6</accession>
<accession>A0A0D1E3J3</accession>
<keyword id="KW-0227">DNA damage</keyword>
<keyword id="KW-0233">DNA recombination</keyword>
<keyword id="KW-0234">DNA repair</keyword>
<keyword id="KW-0255">Endonuclease</keyword>
<keyword id="KW-0378">Hydrolase</keyword>
<keyword id="KW-0540">Nuclease</keyword>
<keyword id="KW-0539">Nucleus</keyword>
<keyword id="KW-1185">Reference proteome</keyword>
<feature type="chain" id="PRO_0000383801" description="Structure-specific endonuclease subunit SLX1">
    <location>
        <begin position="1"/>
        <end position="658"/>
    </location>
</feature>
<feature type="domain" description="GIY-YIG" evidence="1">
    <location>
        <begin position="12"/>
        <end position="92"/>
    </location>
</feature>
<feature type="region of interest" description="Disordered" evidence="2">
    <location>
        <begin position="29"/>
        <end position="52"/>
    </location>
</feature>
<feature type="region of interest" description="Disordered" evidence="2">
    <location>
        <begin position="239"/>
        <end position="269"/>
    </location>
</feature>
<feature type="region of interest" description="Disordered" evidence="2">
    <location>
        <begin position="288"/>
        <end position="328"/>
    </location>
</feature>
<feature type="region of interest" description="Disordered" evidence="2">
    <location>
        <begin position="594"/>
        <end position="658"/>
    </location>
</feature>
<feature type="compositionally biased region" description="Basic and acidic residues" evidence="2">
    <location>
        <begin position="308"/>
        <end position="324"/>
    </location>
</feature>
<feature type="compositionally biased region" description="Basic and acidic residues" evidence="2">
    <location>
        <begin position="627"/>
        <end position="640"/>
    </location>
</feature>
<feature type="compositionally biased region" description="Polar residues" evidence="2">
    <location>
        <begin position="641"/>
        <end position="652"/>
    </location>
</feature>
<sequence length="658" mass="72798">MPSSVTKHTIPPFYACYFLRSLSTPGTTYIGSTPAPPRRKRQHNGHLTQGAYKTSRARPWEMECIVYGFSSKIAALQFEWAWAKPHLSRHLKFLTTEHSVDGTPKNTSDWAGMSLFPSTSLTPGQTRWGRPKKRMARPPSSPNARLLAMRALLRSEPFCGWGLKLAFFTEWSWLAYQRLDACDPGLVAKSALSTLQNRYSRSGKPLHALYPVAVCDFSGVDGKREPLVHVSEPYRLDAGVAEHPVKKRQTSSRQKPHTEETSAWPETLPRSANLKGLDACMQDFATFPIPQPAAPNTDLTKKSKRAKKLSDKARPSALEDHDAENGVDDDDTEVEVVATDAANGSDLALSRPLYRMRFDDLNMEESEWKRFAESIAANVGASRSTTQAMSEFLHTCVQRHIAAQDARTANTALPAPTSLCSLCSIPIDLSQQLDFVLCPNPHASTLPLISSSSTASHETISECRETGCDSIFHLSCLARSFLEQQLGDQKATASSASTVLPTHGTCPCHRGEHKEPTMWADVVRAMYRRHERFERLIQFLIRSGRSLEQHLHPPLEVEMTVKGSKIKERVKASVKATEDAQVDIGDQRQVISGTTSRTKAALTRKRRQPTTSSVNAIQVDPLARNGSKIDGDGAGKDTKKNTTQKAKSNETSEVIDLT</sequence>
<comment type="function">
    <text evidence="1">Catalytic subunit of the SLX1-SLX4 structure-specific endonuclease that resolves DNA secondary structures generated during DNA repair and recombination. Has endonuclease activity towards branched DNA substrates, introducing single-strand cuts in duplex DNA close to junctions with ss-DNA.</text>
</comment>
<comment type="cofactor">
    <cofactor evidence="1">
        <name>a divalent metal cation</name>
        <dbReference type="ChEBI" id="CHEBI:60240"/>
    </cofactor>
</comment>
<comment type="subunit">
    <text evidence="1">Forms a heterodimer with SLX4.</text>
</comment>
<comment type="subcellular location">
    <subcellularLocation>
        <location evidence="1">Nucleus</location>
    </subcellularLocation>
</comment>
<comment type="similarity">
    <text evidence="1">Belongs to the SLX1 family.</text>
</comment>
<reference key="1">
    <citation type="journal article" date="2006" name="Nature">
        <title>Insights from the genome of the biotrophic fungal plant pathogen Ustilago maydis.</title>
        <authorList>
            <person name="Kaemper J."/>
            <person name="Kahmann R."/>
            <person name="Boelker M."/>
            <person name="Ma L.-J."/>
            <person name="Brefort T."/>
            <person name="Saville B.J."/>
            <person name="Banuett F."/>
            <person name="Kronstad J.W."/>
            <person name="Gold S.E."/>
            <person name="Mueller O."/>
            <person name="Perlin M.H."/>
            <person name="Woesten H.A.B."/>
            <person name="de Vries R."/>
            <person name="Ruiz-Herrera J."/>
            <person name="Reynaga-Pena C.G."/>
            <person name="Snetselaar K."/>
            <person name="McCann M."/>
            <person name="Perez-Martin J."/>
            <person name="Feldbruegge M."/>
            <person name="Basse C.W."/>
            <person name="Steinberg G."/>
            <person name="Ibeas J.I."/>
            <person name="Holloman W."/>
            <person name="Guzman P."/>
            <person name="Farman M.L."/>
            <person name="Stajich J.E."/>
            <person name="Sentandreu R."/>
            <person name="Gonzalez-Prieto J.M."/>
            <person name="Kennell J.C."/>
            <person name="Molina L."/>
            <person name="Schirawski J."/>
            <person name="Mendoza-Mendoza A."/>
            <person name="Greilinger D."/>
            <person name="Muench K."/>
            <person name="Roessel N."/>
            <person name="Scherer M."/>
            <person name="Vranes M."/>
            <person name="Ladendorf O."/>
            <person name="Vincon V."/>
            <person name="Fuchs U."/>
            <person name="Sandrock B."/>
            <person name="Meng S."/>
            <person name="Ho E.C.H."/>
            <person name="Cahill M.J."/>
            <person name="Boyce K.J."/>
            <person name="Klose J."/>
            <person name="Klosterman S.J."/>
            <person name="Deelstra H.J."/>
            <person name="Ortiz-Castellanos L."/>
            <person name="Li W."/>
            <person name="Sanchez-Alonso P."/>
            <person name="Schreier P.H."/>
            <person name="Haeuser-Hahn I."/>
            <person name="Vaupel M."/>
            <person name="Koopmann E."/>
            <person name="Friedrich G."/>
            <person name="Voss H."/>
            <person name="Schlueter T."/>
            <person name="Margolis J."/>
            <person name="Platt D."/>
            <person name="Swimmer C."/>
            <person name="Gnirke A."/>
            <person name="Chen F."/>
            <person name="Vysotskaia V."/>
            <person name="Mannhaupt G."/>
            <person name="Gueldener U."/>
            <person name="Muensterkoetter M."/>
            <person name="Haase D."/>
            <person name="Oesterheld M."/>
            <person name="Mewes H.-W."/>
            <person name="Mauceli E.W."/>
            <person name="DeCaprio D."/>
            <person name="Wade C.M."/>
            <person name="Butler J."/>
            <person name="Young S.K."/>
            <person name="Jaffe D.B."/>
            <person name="Calvo S.E."/>
            <person name="Nusbaum C."/>
            <person name="Galagan J.E."/>
            <person name="Birren B.W."/>
        </authorList>
    </citation>
    <scope>NUCLEOTIDE SEQUENCE [LARGE SCALE GENOMIC DNA]</scope>
    <source>
        <strain>DSM 14603 / FGSC 9021 / UM521</strain>
    </source>
</reference>
<reference key="2">
    <citation type="submission" date="2014-09" db="EMBL/GenBank/DDBJ databases">
        <authorList>
            <person name="Gueldener U."/>
            <person name="Muensterkoetter M."/>
            <person name="Walter M.C."/>
            <person name="Mannhaupt G."/>
            <person name="Kahmann R."/>
        </authorList>
    </citation>
    <scope>GENOME REANNOTATION</scope>
    <source>
        <strain>DSM 14603 / FGSC 9021 / UM521</strain>
    </source>
</reference>
<organism>
    <name type="scientific">Mycosarcoma maydis</name>
    <name type="common">Corn smut fungus</name>
    <name type="synonym">Ustilago maydis</name>
    <dbReference type="NCBI Taxonomy" id="5270"/>
    <lineage>
        <taxon>Eukaryota</taxon>
        <taxon>Fungi</taxon>
        <taxon>Dikarya</taxon>
        <taxon>Basidiomycota</taxon>
        <taxon>Ustilaginomycotina</taxon>
        <taxon>Ustilaginomycetes</taxon>
        <taxon>Ustilaginales</taxon>
        <taxon>Ustilaginaceae</taxon>
        <taxon>Mycosarcoma</taxon>
    </lineage>
</organism>
<name>SLX1_MYCMD</name>